<name>ISPH_GLUOX</name>
<sequence length="336" mass="36555">MSEQTTFAPSRTDGVEAHKTLRVLLAGPRGFCAGVDRAIRVVEEALRRYGAPVYVRHEIVHNRTVVEGLEAKGAIFVEELDEVPEDGHVVFSAHGVPKAVPAEAQRRNLLYLDATCPLVSKVHREAERHFAGGGPDQRHILMIGHAGHPEVVGTMGQLPPGAVTLINDAEEARTIQPEDPTKLAFITQTTLSVDDTAEIVDILRSRFPLIEGPKREDICYATTNRQEAVKAIAPESDLVIVIGSPNSSNSQRLREVAERSGARRALLVPKLENLDWSVLEGVETLGISAGASAPESLVQEMVTALAGKYTLKIEERIVKEENINFRLPGPLAGEDD</sequence>
<protein>
    <recommendedName>
        <fullName evidence="1">4-hydroxy-3-methylbut-2-enyl diphosphate reductase</fullName>
        <shortName evidence="1">HMBPP reductase</shortName>
        <ecNumber evidence="1">1.17.7.4</ecNumber>
    </recommendedName>
</protein>
<organism>
    <name type="scientific">Gluconobacter oxydans (strain 621H)</name>
    <name type="common">Gluconobacter suboxydans</name>
    <dbReference type="NCBI Taxonomy" id="290633"/>
    <lineage>
        <taxon>Bacteria</taxon>
        <taxon>Pseudomonadati</taxon>
        <taxon>Pseudomonadota</taxon>
        <taxon>Alphaproteobacteria</taxon>
        <taxon>Acetobacterales</taxon>
        <taxon>Acetobacteraceae</taxon>
        <taxon>Gluconobacter</taxon>
    </lineage>
</organism>
<comment type="function">
    <text evidence="1">Catalyzes the conversion of 1-hydroxy-2-methyl-2-(E)-butenyl 4-diphosphate (HMBPP) into a mixture of isopentenyl diphosphate (IPP) and dimethylallyl diphosphate (DMAPP). Acts in the terminal step of the DOXP/MEP pathway for isoprenoid precursor biosynthesis.</text>
</comment>
<comment type="catalytic activity">
    <reaction evidence="1">
        <text>isopentenyl diphosphate + 2 oxidized [2Fe-2S]-[ferredoxin] + H2O = (2E)-4-hydroxy-3-methylbut-2-enyl diphosphate + 2 reduced [2Fe-2S]-[ferredoxin] + 2 H(+)</text>
        <dbReference type="Rhea" id="RHEA:24488"/>
        <dbReference type="Rhea" id="RHEA-COMP:10000"/>
        <dbReference type="Rhea" id="RHEA-COMP:10001"/>
        <dbReference type="ChEBI" id="CHEBI:15377"/>
        <dbReference type="ChEBI" id="CHEBI:15378"/>
        <dbReference type="ChEBI" id="CHEBI:33737"/>
        <dbReference type="ChEBI" id="CHEBI:33738"/>
        <dbReference type="ChEBI" id="CHEBI:128753"/>
        <dbReference type="ChEBI" id="CHEBI:128769"/>
        <dbReference type="EC" id="1.17.7.4"/>
    </reaction>
</comment>
<comment type="catalytic activity">
    <reaction evidence="1">
        <text>dimethylallyl diphosphate + 2 oxidized [2Fe-2S]-[ferredoxin] + H2O = (2E)-4-hydroxy-3-methylbut-2-enyl diphosphate + 2 reduced [2Fe-2S]-[ferredoxin] + 2 H(+)</text>
        <dbReference type="Rhea" id="RHEA:24825"/>
        <dbReference type="Rhea" id="RHEA-COMP:10000"/>
        <dbReference type="Rhea" id="RHEA-COMP:10001"/>
        <dbReference type="ChEBI" id="CHEBI:15377"/>
        <dbReference type="ChEBI" id="CHEBI:15378"/>
        <dbReference type="ChEBI" id="CHEBI:33737"/>
        <dbReference type="ChEBI" id="CHEBI:33738"/>
        <dbReference type="ChEBI" id="CHEBI:57623"/>
        <dbReference type="ChEBI" id="CHEBI:128753"/>
        <dbReference type="EC" id="1.17.7.4"/>
    </reaction>
</comment>
<comment type="cofactor">
    <cofactor evidence="1">
        <name>[4Fe-4S] cluster</name>
        <dbReference type="ChEBI" id="CHEBI:49883"/>
    </cofactor>
    <text evidence="1">Binds 1 [4Fe-4S] cluster per subunit.</text>
</comment>
<comment type="pathway">
    <text evidence="1">Isoprenoid biosynthesis; dimethylallyl diphosphate biosynthesis; dimethylallyl diphosphate from (2E)-4-hydroxy-3-methylbutenyl diphosphate: step 1/1.</text>
</comment>
<comment type="pathway">
    <text evidence="1">Isoprenoid biosynthesis; isopentenyl diphosphate biosynthesis via DXP pathway; isopentenyl diphosphate from 1-deoxy-D-xylulose 5-phosphate: step 6/6.</text>
</comment>
<comment type="similarity">
    <text evidence="1">Belongs to the IspH family.</text>
</comment>
<reference key="1">
    <citation type="journal article" date="2005" name="Nat. Biotechnol.">
        <title>Complete genome sequence of the acetic acid bacterium Gluconobacter oxydans.</title>
        <authorList>
            <person name="Prust C."/>
            <person name="Hoffmeister M."/>
            <person name="Liesegang H."/>
            <person name="Wiezer A."/>
            <person name="Fricke W.F."/>
            <person name="Ehrenreich A."/>
            <person name="Gottschalk G."/>
            <person name="Deppenmeier U."/>
        </authorList>
    </citation>
    <scope>NUCLEOTIDE SEQUENCE [LARGE SCALE GENOMIC DNA]</scope>
    <source>
        <strain>621H</strain>
    </source>
</reference>
<proteinExistence type="inferred from homology"/>
<gene>
    <name evidence="1" type="primary">ispH</name>
    <name type="ordered locus">GOX0179</name>
</gene>
<dbReference type="EC" id="1.17.7.4" evidence="1"/>
<dbReference type="EMBL" id="CP000009">
    <property type="protein sequence ID" value="AAW59969.1"/>
    <property type="molecule type" value="Genomic_DNA"/>
</dbReference>
<dbReference type="RefSeq" id="WP_011251772.1">
    <property type="nucleotide sequence ID" value="NC_006677.1"/>
</dbReference>
<dbReference type="SMR" id="Q5FUH7"/>
<dbReference type="STRING" id="290633.GOX0179"/>
<dbReference type="KEGG" id="gox:GOX0179"/>
<dbReference type="eggNOG" id="COG0761">
    <property type="taxonomic scope" value="Bacteria"/>
</dbReference>
<dbReference type="HOGENOM" id="CLU_027486_1_0_5"/>
<dbReference type="UniPathway" id="UPA00056">
    <property type="reaction ID" value="UER00097"/>
</dbReference>
<dbReference type="UniPathway" id="UPA00059">
    <property type="reaction ID" value="UER00105"/>
</dbReference>
<dbReference type="Proteomes" id="UP000006375">
    <property type="component" value="Chromosome"/>
</dbReference>
<dbReference type="GO" id="GO:0051539">
    <property type="term" value="F:4 iron, 4 sulfur cluster binding"/>
    <property type="evidence" value="ECO:0007669"/>
    <property type="project" value="UniProtKB-UniRule"/>
</dbReference>
<dbReference type="GO" id="GO:0051745">
    <property type="term" value="F:4-hydroxy-3-methylbut-2-enyl diphosphate reductase activity"/>
    <property type="evidence" value="ECO:0007669"/>
    <property type="project" value="UniProtKB-UniRule"/>
</dbReference>
<dbReference type="GO" id="GO:0046872">
    <property type="term" value="F:metal ion binding"/>
    <property type="evidence" value="ECO:0007669"/>
    <property type="project" value="UniProtKB-KW"/>
</dbReference>
<dbReference type="GO" id="GO:0050992">
    <property type="term" value="P:dimethylallyl diphosphate biosynthetic process"/>
    <property type="evidence" value="ECO:0007669"/>
    <property type="project" value="UniProtKB-UniRule"/>
</dbReference>
<dbReference type="GO" id="GO:0019288">
    <property type="term" value="P:isopentenyl diphosphate biosynthetic process, methylerythritol 4-phosphate pathway"/>
    <property type="evidence" value="ECO:0007669"/>
    <property type="project" value="UniProtKB-UniRule"/>
</dbReference>
<dbReference type="GO" id="GO:0016114">
    <property type="term" value="P:terpenoid biosynthetic process"/>
    <property type="evidence" value="ECO:0007669"/>
    <property type="project" value="UniProtKB-UniRule"/>
</dbReference>
<dbReference type="CDD" id="cd13944">
    <property type="entry name" value="lytB_ispH"/>
    <property type="match status" value="1"/>
</dbReference>
<dbReference type="Gene3D" id="3.40.50.11270">
    <property type="match status" value="1"/>
</dbReference>
<dbReference type="Gene3D" id="3.40.1010.20">
    <property type="entry name" value="4-hydroxy-3-methylbut-2-enyl diphosphate reductase, catalytic domain"/>
    <property type="match status" value="2"/>
</dbReference>
<dbReference type="HAMAP" id="MF_00191">
    <property type="entry name" value="IspH"/>
    <property type="match status" value="1"/>
</dbReference>
<dbReference type="InterPro" id="IPR003451">
    <property type="entry name" value="LytB/IspH"/>
</dbReference>
<dbReference type="NCBIfam" id="TIGR00216">
    <property type="entry name" value="ispH_lytB"/>
    <property type="match status" value="1"/>
</dbReference>
<dbReference type="NCBIfam" id="NF002190">
    <property type="entry name" value="PRK01045.1-4"/>
    <property type="match status" value="1"/>
</dbReference>
<dbReference type="PANTHER" id="PTHR30426">
    <property type="entry name" value="4-HYDROXY-3-METHYLBUT-2-ENYL DIPHOSPHATE REDUCTASE"/>
    <property type="match status" value="1"/>
</dbReference>
<dbReference type="PANTHER" id="PTHR30426:SF0">
    <property type="entry name" value="4-HYDROXY-3-METHYLBUT-2-ENYL DIPHOSPHATE REDUCTASE"/>
    <property type="match status" value="1"/>
</dbReference>
<dbReference type="Pfam" id="PF02401">
    <property type="entry name" value="LYTB"/>
    <property type="match status" value="1"/>
</dbReference>
<feature type="chain" id="PRO_0000128822" description="4-hydroxy-3-methylbut-2-enyl diphosphate reductase">
    <location>
        <begin position="1"/>
        <end position="336"/>
    </location>
</feature>
<feature type="active site" description="Proton donor" evidence="1">
    <location>
        <position position="150"/>
    </location>
</feature>
<feature type="binding site" evidence="1">
    <location>
        <position position="32"/>
    </location>
    <ligand>
        <name>[4Fe-4S] cluster</name>
        <dbReference type="ChEBI" id="CHEBI:49883"/>
    </ligand>
</feature>
<feature type="binding site" evidence="1">
    <location>
        <position position="61"/>
    </location>
    <ligand>
        <name>(2E)-4-hydroxy-3-methylbut-2-enyl diphosphate</name>
        <dbReference type="ChEBI" id="CHEBI:128753"/>
    </ligand>
</feature>
<feature type="binding site" evidence="1">
    <location>
        <position position="61"/>
    </location>
    <ligand>
        <name>dimethylallyl diphosphate</name>
        <dbReference type="ChEBI" id="CHEBI:57623"/>
    </ligand>
</feature>
<feature type="binding site" evidence="1">
    <location>
        <position position="61"/>
    </location>
    <ligand>
        <name>isopentenyl diphosphate</name>
        <dbReference type="ChEBI" id="CHEBI:128769"/>
    </ligand>
</feature>
<feature type="binding site" evidence="1">
    <location>
        <position position="94"/>
    </location>
    <ligand>
        <name>(2E)-4-hydroxy-3-methylbut-2-enyl diphosphate</name>
        <dbReference type="ChEBI" id="CHEBI:128753"/>
    </ligand>
</feature>
<feature type="binding site" evidence="1">
    <location>
        <position position="94"/>
    </location>
    <ligand>
        <name>dimethylallyl diphosphate</name>
        <dbReference type="ChEBI" id="CHEBI:57623"/>
    </ligand>
</feature>
<feature type="binding site" evidence="1">
    <location>
        <position position="94"/>
    </location>
    <ligand>
        <name>isopentenyl diphosphate</name>
        <dbReference type="ChEBI" id="CHEBI:128769"/>
    </ligand>
</feature>
<feature type="binding site" evidence="1">
    <location>
        <position position="116"/>
    </location>
    <ligand>
        <name>[4Fe-4S] cluster</name>
        <dbReference type="ChEBI" id="CHEBI:49883"/>
    </ligand>
</feature>
<feature type="binding site" evidence="1">
    <location>
        <position position="148"/>
    </location>
    <ligand>
        <name>(2E)-4-hydroxy-3-methylbut-2-enyl diphosphate</name>
        <dbReference type="ChEBI" id="CHEBI:128753"/>
    </ligand>
</feature>
<feature type="binding site" evidence="1">
    <location>
        <position position="148"/>
    </location>
    <ligand>
        <name>dimethylallyl diphosphate</name>
        <dbReference type="ChEBI" id="CHEBI:57623"/>
    </ligand>
</feature>
<feature type="binding site" evidence="1">
    <location>
        <position position="148"/>
    </location>
    <ligand>
        <name>isopentenyl diphosphate</name>
        <dbReference type="ChEBI" id="CHEBI:128769"/>
    </ligand>
</feature>
<feature type="binding site" evidence="1">
    <location>
        <position position="189"/>
    </location>
    <ligand>
        <name>(2E)-4-hydroxy-3-methylbut-2-enyl diphosphate</name>
        <dbReference type="ChEBI" id="CHEBI:128753"/>
    </ligand>
</feature>
<feature type="binding site" evidence="1">
    <location>
        <position position="219"/>
    </location>
    <ligand>
        <name>[4Fe-4S] cluster</name>
        <dbReference type="ChEBI" id="CHEBI:49883"/>
    </ligand>
</feature>
<feature type="binding site" evidence="1">
    <location>
        <position position="247"/>
    </location>
    <ligand>
        <name>(2E)-4-hydroxy-3-methylbut-2-enyl diphosphate</name>
        <dbReference type="ChEBI" id="CHEBI:128753"/>
    </ligand>
</feature>
<feature type="binding site" evidence="1">
    <location>
        <position position="247"/>
    </location>
    <ligand>
        <name>dimethylallyl diphosphate</name>
        <dbReference type="ChEBI" id="CHEBI:57623"/>
    </ligand>
</feature>
<feature type="binding site" evidence="1">
    <location>
        <position position="247"/>
    </location>
    <ligand>
        <name>isopentenyl diphosphate</name>
        <dbReference type="ChEBI" id="CHEBI:128769"/>
    </ligand>
</feature>
<feature type="binding site" evidence="1">
    <location>
        <position position="248"/>
    </location>
    <ligand>
        <name>(2E)-4-hydroxy-3-methylbut-2-enyl diphosphate</name>
        <dbReference type="ChEBI" id="CHEBI:128753"/>
    </ligand>
</feature>
<feature type="binding site" evidence="1">
    <location>
        <position position="248"/>
    </location>
    <ligand>
        <name>dimethylallyl diphosphate</name>
        <dbReference type="ChEBI" id="CHEBI:57623"/>
    </ligand>
</feature>
<feature type="binding site" evidence="1">
    <location>
        <position position="248"/>
    </location>
    <ligand>
        <name>isopentenyl diphosphate</name>
        <dbReference type="ChEBI" id="CHEBI:128769"/>
    </ligand>
</feature>
<feature type="binding site" evidence="1">
    <location>
        <position position="249"/>
    </location>
    <ligand>
        <name>(2E)-4-hydroxy-3-methylbut-2-enyl diphosphate</name>
        <dbReference type="ChEBI" id="CHEBI:128753"/>
    </ligand>
</feature>
<feature type="binding site" evidence="1">
    <location>
        <position position="249"/>
    </location>
    <ligand>
        <name>dimethylallyl diphosphate</name>
        <dbReference type="ChEBI" id="CHEBI:57623"/>
    </ligand>
</feature>
<feature type="binding site" evidence="1">
    <location>
        <position position="249"/>
    </location>
    <ligand>
        <name>isopentenyl diphosphate</name>
        <dbReference type="ChEBI" id="CHEBI:128769"/>
    </ligand>
</feature>
<feature type="binding site" evidence="1">
    <location>
        <position position="292"/>
    </location>
    <ligand>
        <name>(2E)-4-hydroxy-3-methylbut-2-enyl diphosphate</name>
        <dbReference type="ChEBI" id="CHEBI:128753"/>
    </ligand>
</feature>
<feature type="binding site" evidence="1">
    <location>
        <position position="292"/>
    </location>
    <ligand>
        <name>dimethylallyl diphosphate</name>
        <dbReference type="ChEBI" id="CHEBI:57623"/>
    </ligand>
</feature>
<feature type="binding site" evidence="1">
    <location>
        <position position="292"/>
    </location>
    <ligand>
        <name>isopentenyl diphosphate</name>
        <dbReference type="ChEBI" id="CHEBI:128769"/>
    </ligand>
</feature>
<evidence type="ECO:0000255" key="1">
    <source>
        <dbReference type="HAMAP-Rule" id="MF_00191"/>
    </source>
</evidence>
<accession>Q5FUH7</accession>
<keyword id="KW-0004">4Fe-4S</keyword>
<keyword id="KW-0408">Iron</keyword>
<keyword id="KW-0411">Iron-sulfur</keyword>
<keyword id="KW-0414">Isoprene biosynthesis</keyword>
<keyword id="KW-0479">Metal-binding</keyword>
<keyword id="KW-0560">Oxidoreductase</keyword>
<keyword id="KW-1185">Reference proteome</keyword>